<dbReference type="EMBL" id="BA000018">
    <property type="protein sequence ID" value="BAB43481.1"/>
    <property type="molecule type" value="Genomic_DNA"/>
</dbReference>
<dbReference type="PIR" id="H90039">
    <property type="entry name" value="H90039"/>
</dbReference>
<dbReference type="RefSeq" id="WP_000706315.1">
    <property type="nucleotide sequence ID" value="NC_002745.2"/>
</dbReference>
<dbReference type="SMR" id="Q7A3U5"/>
<dbReference type="EnsemblBacteria" id="BAB43481">
    <property type="protein sequence ID" value="BAB43481"/>
    <property type="gene ID" value="BAB43481"/>
</dbReference>
<dbReference type="KEGG" id="sau:SA2179"/>
<dbReference type="HOGENOM" id="CLU_000445_90_1_9"/>
<dbReference type="GO" id="GO:0005737">
    <property type="term" value="C:cytoplasm"/>
    <property type="evidence" value="ECO:0007669"/>
    <property type="project" value="UniProtKB-SubCell"/>
</dbReference>
<dbReference type="GO" id="GO:0003677">
    <property type="term" value="F:DNA binding"/>
    <property type="evidence" value="ECO:0007669"/>
    <property type="project" value="UniProtKB-KW"/>
</dbReference>
<dbReference type="GO" id="GO:0000160">
    <property type="term" value="P:phosphorelay signal transduction system"/>
    <property type="evidence" value="ECO:0007669"/>
    <property type="project" value="UniProtKB-KW"/>
</dbReference>
<dbReference type="GO" id="GO:0006355">
    <property type="term" value="P:regulation of DNA-templated transcription"/>
    <property type="evidence" value="ECO:0007669"/>
    <property type="project" value="InterPro"/>
</dbReference>
<dbReference type="CDD" id="cd06170">
    <property type="entry name" value="LuxR_C_like"/>
    <property type="match status" value="1"/>
</dbReference>
<dbReference type="CDD" id="cd17535">
    <property type="entry name" value="REC_NarL-like"/>
    <property type="match status" value="1"/>
</dbReference>
<dbReference type="Gene3D" id="3.40.50.2300">
    <property type="match status" value="1"/>
</dbReference>
<dbReference type="InterPro" id="IPR011006">
    <property type="entry name" value="CheY-like_superfamily"/>
</dbReference>
<dbReference type="InterPro" id="IPR016032">
    <property type="entry name" value="Sig_transdc_resp-reg_C-effctor"/>
</dbReference>
<dbReference type="InterPro" id="IPR001789">
    <property type="entry name" value="Sig_transdc_resp-reg_receiver"/>
</dbReference>
<dbReference type="InterPro" id="IPR000792">
    <property type="entry name" value="Tscrpt_reg_LuxR_C"/>
</dbReference>
<dbReference type="InterPro" id="IPR039420">
    <property type="entry name" value="WalR-like"/>
</dbReference>
<dbReference type="PANTHER" id="PTHR43214:SF37">
    <property type="entry name" value="TRANSCRIPTIONAL REGULATORY PROTEIN YDFI"/>
    <property type="match status" value="1"/>
</dbReference>
<dbReference type="PANTHER" id="PTHR43214">
    <property type="entry name" value="TWO-COMPONENT RESPONSE REGULATOR"/>
    <property type="match status" value="1"/>
</dbReference>
<dbReference type="Pfam" id="PF00196">
    <property type="entry name" value="GerE"/>
    <property type="match status" value="1"/>
</dbReference>
<dbReference type="Pfam" id="PF00072">
    <property type="entry name" value="Response_reg"/>
    <property type="match status" value="1"/>
</dbReference>
<dbReference type="PRINTS" id="PR00038">
    <property type="entry name" value="HTHLUXR"/>
</dbReference>
<dbReference type="SMART" id="SM00421">
    <property type="entry name" value="HTH_LUXR"/>
    <property type="match status" value="1"/>
</dbReference>
<dbReference type="SMART" id="SM00448">
    <property type="entry name" value="REC"/>
    <property type="match status" value="1"/>
</dbReference>
<dbReference type="SUPFAM" id="SSF46894">
    <property type="entry name" value="C-terminal effector domain of the bipartite response regulators"/>
    <property type="match status" value="1"/>
</dbReference>
<dbReference type="SUPFAM" id="SSF52172">
    <property type="entry name" value="CheY-like"/>
    <property type="match status" value="1"/>
</dbReference>
<dbReference type="PROSITE" id="PS00622">
    <property type="entry name" value="HTH_LUXR_1"/>
    <property type="match status" value="1"/>
</dbReference>
<dbReference type="PROSITE" id="PS50043">
    <property type="entry name" value="HTH_LUXR_2"/>
    <property type="match status" value="1"/>
</dbReference>
<dbReference type="PROSITE" id="PS50110">
    <property type="entry name" value="RESPONSE_REGULATORY"/>
    <property type="match status" value="1"/>
</dbReference>
<feature type="chain" id="PRO_0000349351" description="Oxygen regulatory protein NreC">
    <location>
        <begin position="1"/>
        <end position="217"/>
    </location>
</feature>
<feature type="domain" description="Response regulatory" evidence="2">
    <location>
        <begin position="2"/>
        <end position="119"/>
    </location>
</feature>
<feature type="domain" description="HTH luxR-type" evidence="3">
    <location>
        <begin position="148"/>
        <end position="213"/>
    </location>
</feature>
<feature type="DNA-binding region" description="H-T-H motif" evidence="3">
    <location>
        <begin position="172"/>
        <end position="191"/>
    </location>
</feature>
<feature type="modified residue" description="4-aspartylphosphate" evidence="2">
    <location>
        <position position="53"/>
    </location>
</feature>
<gene>
    <name type="primary">nreC</name>
    <name type="ordered locus">SA2179</name>
</gene>
<name>NREC_STAAN</name>
<organism>
    <name type="scientific">Staphylococcus aureus (strain N315)</name>
    <dbReference type="NCBI Taxonomy" id="158879"/>
    <lineage>
        <taxon>Bacteria</taxon>
        <taxon>Bacillati</taxon>
        <taxon>Bacillota</taxon>
        <taxon>Bacilli</taxon>
        <taxon>Bacillales</taxon>
        <taxon>Staphylococcaceae</taxon>
        <taxon>Staphylococcus</taxon>
    </lineage>
</organism>
<protein>
    <recommendedName>
        <fullName>Oxygen regulatory protein NreC</fullName>
    </recommendedName>
    <alternativeName>
        <fullName>Nitrogen regulation protein C</fullName>
    </alternativeName>
</protein>
<accession>Q7A3U5</accession>
<sequence>MKIVIADDHAVVRTGFSMILNYQNDMEVVATAADGVEAYQKVMEYKPDVLLMDLSMPPGESGLIATSKIADSFPETKILILTMFDDEEYLFHVLRNGAKGYILKNAPDEQLLLAIRTVYKGETYVDMKLTTSLVNEFVSNSNQDTANTTDPFKILSKRELEILPLIAKGYGNKEIAEKLFVSVKTVEAHKTHIMTKLGLKSKPELVEYALKKKLLEF</sequence>
<comment type="function">
    <text evidence="1">Member of the two-component regulatory system NreB/NreC involved in the control of dissimilatory nitrate/nitrite reduction in response to oxygen. Phosphorylated NreC binds to a GC-rich palindromic sequence at the promoters of the nitrate (narGHJI) and nitrite (nir) reductase operons, as well as the putative nitrate transporter gene narT, and activates their expression (By similarity).</text>
</comment>
<comment type="subcellular location">
    <subcellularLocation>
        <location evidence="4">Cytoplasm</location>
    </subcellularLocation>
</comment>
<comment type="PTM">
    <text evidence="1">Phosphorylated by NreB.</text>
</comment>
<keyword id="KW-0010">Activator</keyword>
<keyword id="KW-0963">Cytoplasm</keyword>
<keyword id="KW-0238">DNA-binding</keyword>
<keyword id="KW-0597">Phosphoprotein</keyword>
<keyword id="KW-0804">Transcription</keyword>
<keyword id="KW-0805">Transcription regulation</keyword>
<keyword id="KW-0902">Two-component regulatory system</keyword>
<evidence type="ECO:0000250" key="1"/>
<evidence type="ECO:0000255" key="2">
    <source>
        <dbReference type="PROSITE-ProRule" id="PRU00169"/>
    </source>
</evidence>
<evidence type="ECO:0000255" key="3">
    <source>
        <dbReference type="PROSITE-ProRule" id="PRU00411"/>
    </source>
</evidence>
<evidence type="ECO:0000305" key="4"/>
<reference key="1">
    <citation type="journal article" date="2001" name="Lancet">
        <title>Whole genome sequencing of meticillin-resistant Staphylococcus aureus.</title>
        <authorList>
            <person name="Kuroda M."/>
            <person name="Ohta T."/>
            <person name="Uchiyama I."/>
            <person name="Baba T."/>
            <person name="Yuzawa H."/>
            <person name="Kobayashi I."/>
            <person name="Cui L."/>
            <person name="Oguchi A."/>
            <person name="Aoki K."/>
            <person name="Nagai Y."/>
            <person name="Lian J.-Q."/>
            <person name="Ito T."/>
            <person name="Kanamori M."/>
            <person name="Matsumaru H."/>
            <person name="Maruyama A."/>
            <person name="Murakami H."/>
            <person name="Hosoyama A."/>
            <person name="Mizutani-Ui Y."/>
            <person name="Takahashi N.K."/>
            <person name="Sawano T."/>
            <person name="Inoue R."/>
            <person name="Kaito C."/>
            <person name="Sekimizu K."/>
            <person name="Hirakawa H."/>
            <person name="Kuhara S."/>
            <person name="Goto S."/>
            <person name="Yabuzaki J."/>
            <person name="Kanehisa M."/>
            <person name="Yamashita A."/>
            <person name="Oshima K."/>
            <person name="Furuya K."/>
            <person name="Yoshino C."/>
            <person name="Shiba T."/>
            <person name="Hattori M."/>
            <person name="Ogasawara N."/>
            <person name="Hayashi H."/>
            <person name="Hiramatsu K."/>
        </authorList>
    </citation>
    <scope>NUCLEOTIDE SEQUENCE [LARGE SCALE GENOMIC DNA]</scope>
    <source>
        <strain>N315</strain>
    </source>
</reference>
<proteinExistence type="inferred from homology"/>